<reference key="1">
    <citation type="journal article" date="2003" name="Proc. Natl. Acad. Sci. U.S.A.">
        <title>Reductive genome evolution in Buchnera aphidicola.</title>
        <authorList>
            <person name="van Ham R.C.H.J."/>
            <person name="Kamerbeek J."/>
            <person name="Palacios C."/>
            <person name="Rausell C."/>
            <person name="Abascal F."/>
            <person name="Bastolla U."/>
            <person name="Fernandez J.M."/>
            <person name="Jimenez L."/>
            <person name="Postigo M."/>
            <person name="Silva F.J."/>
            <person name="Tamames J."/>
            <person name="Viguera E."/>
            <person name="Latorre A."/>
            <person name="Valencia A."/>
            <person name="Moran F."/>
            <person name="Moya A."/>
        </authorList>
    </citation>
    <scope>NUCLEOTIDE SEQUENCE [LARGE SCALE GENOMIC DNA]</scope>
    <source>
        <strain>Bp</strain>
    </source>
</reference>
<sequence>MAEFSSNDIDPIETEDWIQAIKSVIREDGLERANFIINTVKKYVPYKNKVVFKKCAISNYVNTIPVEEEPNYPGDLFIEQKIRSVIRWNAIMMVLRASKKNLDLGGHLSSFQSAATIYEVCFNHFFHATNENNGGDLVYFQGHISPGIYSRAFIEDRLTQKQLDNFRQEIDGIGLSSYPHPKLMPNFWQFPTVSMGLGPICAIYQAKFLKYLEHRNLKCTNNQKVYAFLGDGEMDEPESKGAISIAAREKLDNLIFIVNCNLQRLDGPVIGNGKVIDELESVFKGCGWKVIKVIWGSKWDSLLKKDVSGKLIKLMNETLDGDYQTFKSKNGAYIRKYFFGKYLETQELVKDMSDDQIWNLDRGGHDPKKIYAALSKANSIVGKPVIILMHTVKGYGMGDIAEGKNIAHQIKKIDIKGITYIKNRFKVPVEENELKYLPYVSFDANSIEYKYLHARRKKLGGYLPIRLSNFTNFFTLPKLDEFSTLLTEQKKEISTTIVFIRILNILLRNSFIKDRIVPIIADEARTFGMEGLFRKIGIYNFIGQKYTPQDKELLAYYKEDKKGQILQEGINELGAAASWLAAATSYSTNNFPMIPFYIFYSMFGFQRIGDLFWAAGDQQARGFLIGGTSGKTTLNGEGLQHGDGHSHIQALTIPNCISYNPAYAYELAVIVHDGLQRMYGPSQENIYYYITTMNENYVMPGISKNMYEGICKGIYKLKHVGKKNVKVQIMGSGSILQCVCRAAEILLEEYDIGSDVYSVTSFTELARNGQDCDRWNLLHPTQEKKVPFVTKIMNKLPAIAVTDYMKLFSEQVRAYIPAVTYRVLGTDGFGRSDSRKNLRRYFEIDEYHIVIAVLGELEKIGDVDKNTIVNAISKFKIDINKVNPRLA</sequence>
<name>ODP1_BUCBP</name>
<accession>Q89AR0</accession>
<feature type="chain" id="PRO_0000162242" description="Pyruvate dehydrogenase E1 component">
    <location>
        <begin position="1"/>
        <end position="887"/>
    </location>
</feature>
<comment type="function">
    <text evidence="1">Component of the pyruvate dehydrogenase (PDH) complex, that catalyzes the overall conversion of pyruvate to acetyl-CoA and CO(2).</text>
</comment>
<comment type="catalytic activity">
    <reaction>
        <text>N(6)-[(R)-lipoyl]-L-lysyl-[protein] + pyruvate + H(+) = N(6)-[(R)-S(8)-acetyldihydrolipoyl]-L-lysyl-[protein] + CO2</text>
        <dbReference type="Rhea" id="RHEA:19189"/>
        <dbReference type="Rhea" id="RHEA-COMP:10474"/>
        <dbReference type="Rhea" id="RHEA-COMP:10478"/>
        <dbReference type="ChEBI" id="CHEBI:15361"/>
        <dbReference type="ChEBI" id="CHEBI:15378"/>
        <dbReference type="ChEBI" id="CHEBI:16526"/>
        <dbReference type="ChEBI" id="CHEBI:83099"/>
        <dbReference type="ChEBI" id="CHEBI:83111"/>
        <dbReference type="EC" id="1.2.4.1"/>
    </reaction>
</comment>
<comment type="cofactor">
    <cofactor evidence="1">
        <name>thiamine diphosphate</name>
        <dbReference type="ChEBI" id="CHEBI:58937"/>
    </cofactor>
</comment>
<comment type="subunit">
    <text evidence="1">Homodimer. Part of the PDH complex, consisting of multiple copies of pyruvate dehydrogenase (E1), dihydrolipoamide acetyltransferase (E2) and lipoamide dehydrogenase (E3).</text>
</comment>
<evidence type="ECO:0000250" key="1"/>
<keyword id="KW-0560">Oxidoreductase</keyword>
<keyword id="KW-0670">Pyruvate</keyword>
<keyword id="KW-1185">Reference proteome</keyword>
<keyword id="KW-0786">Thiamine pyrophosphate</keyword>
<proteinExistence type="inferred from homology"/>
<dbReference type="EC" id="1.2.4.1"/>
<dbReference type="EMBL" id="AE016826">
    <property type="protein sequence ID" value="AAO26921.1"/>
    <property type="molecule type" value="Genomic_DNA"/>
</dbReference>
<dbReference type="RefSeq" id="WP_011091322.1">
    <property type="nucleotide sequence ID" value="NC_004545.1"/>
</dbReference>
<dbReference type="SMR" id="Q89AR0"/>
<dbReference type="STRING" id="224915.bbp_189"/>
<dbReference type="KEGG" id="bab:bbp_189"/>
<dbReference type="eggNOG" id="COG2609">
    <property type="taxonomic scope" value="Bacteria"/>
</dbReference>
<dbReference type="HOGENOM" id="CLU_009154_2_0_6"/>
<dbReference type="OrthoDB" id="9759664at2"/>
<dbReference type="Proteomes" id="UP000000601">
    <property type="component" value="Chromosome"/>
</dbReference>
<dbReference type="GO" id="GO:0004739">
    <property type="term" value="F:pyruvate dehydrogenase (acetyl-transferring) activity"/>
    <property type="evidence" value="ECO:0007669"/>
    <property type="project" value="UniProtKB-EC"/>
</dbReference>
<dbReference type="CDD" id="cd02017">
    <property type="entry name" value="TPP_E1_EcPDC_like"/>
    <property type="match status" value="1"/>
</dbReference>
<dbReference type="FunFam" id="3.40.50.970:FF:000009">
    <property type="entry name" value="Pyruvate dehydrogenase E1 component"/>
    <property type="match status" value="1"/>
</dbReference>
<dbReference type="FunFam" id="3.40.50.970:FF:000011">
    <property type="entry name" value="Pyruvate dehydrogenase E1 component"/>
    <property type="match status" value="1"/>
</dbReference>
<dbReference type="Gene3D" id="3.40.50.920">
    <property type="match status" value="1"/>
</dbReference>
<dbReference type="Gene3D" id="3.40.50.970">
    <property type="match status" value="2"/>
</dbReference>
<dbReference type="InterPro" id="IPR035807">
    <property type="entry name" value="PDC_E1_N"/>
</dbReference>
<dbReference type="InterPro" id="IPR051157">
    <property type="entry name" value="PDH/Transketolase"/>
</dbReference>
<dbReference type="InterPro" id="IPR004660">
    <property type="entry name" value="PDH_E1"/>
</dbReference>
<dbReference type="InterPro" id="IPR041621">
    <property type="entry name" value="PDH_E1_M"/>
</dbReference>
<dbReference type="InterPro" id="IPR029061">
    <property type="entry name" value="THDP-binding"/>
</dbReference>
<dbReference type="InterPro" id="IPR009014">
    <property type="entry name" value="Transketo_C/PFOR_II"/>
</dbReference>
<dbReference type="InterPro" id="IPR055152">
    <property type="entry name" value="Transketolase-like_C_2"/>
</dbReference>
<dbReference type="InterPro" id="IPR005474">
    <property type="entry name" value="Transketolase_N"/>
</dbReference>
<dbReference type="NCBIfam" id="TIGR00759">
    <property type="entry name" value="aceE"/>
    <property type="match status" value="1"/>
</dbReference>
<dbReference type="PANTHER" id="PTHR43825">
    <property type="entry name" value="PYRUVATE DEHYDROGENASE E1 COMPONENT"/>
    <property type="match status" value="1"/>
</dbReference>
<dbReference type="PANTHER" id="PTHR43825:SF3">
    <property type="entry name" value="PYRUVATE DEHYDROGENASE E1 COMPONENT"/>
    <property type="match status" value="1"/>
</dbReference>
<dbReference type="Pfam" id="PF17831">
    <property type="entry name" value="PDH_E1_M"/>
    <property type="match status" value="1"/>
</dbReference>
<dbReference type="Pfam" id="PF22613">
    <property type="entry name" value="Transketolase_C_1"/>
    <property type="match status" value="1"/>
</dbReference>
<dbReference type="Pfam" id="PF00456">
    <property type="entry name" value="Transketolase_N"/>
    <property type="match status" value="1"/>
</dbReference>
<dbReference type="PIRSF" id="PIRSF000156">
    <property type="entry name" value="Pyruvate_dh_E1"/>
    <property type="match status" value="1"/>
</dbReference>
<dbReference type="SUPFAM" id="SSF52518">
    <property type="entry name" value="Thiamin diphosphate-binding fold (THDP-binding)"/>
    <property type="match status" value="2"/>
</dbReference>
<dbReference type="SUPFAM" id="SSF52922">
    <property type="entry name" value="TK C-terminal domain-like"/>
    <property type="match status" value="1"/>
</dbReference>
<protein>
    <recommendedName>
        <fullName>Pyruvate dehydrogenase E1 component</fullName>
        <shortName>PDH E1 component</shortName>
        <ecNumber>1.2.4.1</ecNumber>
    </recommendedName>
</protein>
<organism>
    <name type="scientific">Buchnera aphidicola subsp. Baizongia pistaciae (strain Bp)</name>
    <dbReference type="NCBI Taxonomy" id="224915"/>
    <lineage>
        <taxon>Bacteria</taxon>
        <taxon>Pseudomonadati</taxon>
        <taxon>Pseudomonadota</taxon>
        <taxon>Gammaproteobacteria</taxon>
        <taxon>Enterobacterales</taxon>
        <taxon>Erwiniaceae</taxon>
        <taxon>Buchnera</taxon>
    </lineage>
</organism>
<gene>
    <name type="primary">aceE</name>
    <name type="ordered locus">bbp_189</name>
</gene>